<protein>
    <recommendedName>
        <fullName>Deoxyribonuclease-1-like 2</fullName>
        <ecNumber>3.1.21.-</ecNumber>
    </recommendedName>
    <alternativeName>
        <fullName>DNase I homolog protein DHP1</fullName>
    </alternativeName>
    <alternativeName>
        <fullName>Deoxyribonuclease I-like 2</fullName>
        <shortName>DNase I-like 2</shortName>
    </alternativeName>
</protein>
<keyword id="KW-0025">Alternative splicing</keyword>
<keyword id="KW-0106">Calcium</keyword>
<keyword id="KW-0963">Cytoplasm</keyword>
<keyword id="KW-1015">Disulfide bond</keyword>
<keyword id="KW-0255">Endonuclease</keyword>
<keyword id="KW-0378">Hydrolase</keyword>
<keyword id="KW-0460">Magnesium</keyword>
<keyword id="KW-0479">Metal-binding</keyword>
<keyword id="KW-0540">Nuclease</keyword>
<keyword id="KW-1267">Proteomics identification</keyword>
<keyword id="KW-1185">Reference proteome</keyword>
<keyword id="KW-0964">Secreted</keyword>
<keyword id="KW-0732">Signal</keyword>
<dbReference type="EC" id="3.1.21.-"/>
<dbReference type="EMBL" id="U62647">
    <property type="protein sequence ID" value="AAB63981.1"/>
    <property type="molecule type" value="mRNA"/>
</dbReference>
<dbReference type="EMBL" id="AY298957">
    <property type="protein sequence ID" value="AAQ73759.1"/>
    <property type="molecule type" value="mRNA"/>
</dbReference>
<dbReference type="EMBL" id="AY298958">
    <property type="protein sequence ID" value="AAQ73760.1"/>
    <property type="molecule type" value="Genomic_DNA"/>
</dbReference>
<dbReference type="EMBL" id="AY298958">
    <property type="protein sequence ID" value="AAQ73761.1"/>
    <property type="molecule type" value="Genomic_DNA"/>
</dbReference>
<dbReference type="EMBL" id="AK098028">
    <property type="protein sequence ID" value="BAG53566.1"/>
    <property type="molecule type" value="mRNA"/>
</dbReference>
<dbReference type="EMBL" id="AC009065">
    <property type="status" value="NOT_ANNOTATED_CDS"/>
    <property type="molecule type" value="Genomic_DNA"/>
</dbReference>
<dbReference type="EMBL" id="CH471112">
    <property type="protein sequence ID" value="EAW85526.1"/>
    <property type="molecule type" value="Genomic_DNA"/>
</dbReference>
<dbReference type="EMBL" id="CH471112">
    <property type="protein sequence ID" value="EAW85527.1"/>
    <property type="molecule type" value="Genomic_DNA"/>
</dbReference>
<dbReference type="EMBL" id="CH471112">
    <property type="protein sequence ID" value="EAW85528.1"/>
    <property type="molecule type" value="Genomic_DNA"/>
</dbReference>
<dbReference type="EMBL" id="CH471112">
    <property type="protein sequence ID" value="EAW85529.1"/>
    <property type="molecule type" value="Genomic_DNA"/>
</dbReference>
<dbReference type="EMBL" id="BC035205">
    <property type="protein sequence ID" value="AAH35205.1"/>
    <property type="molecule type" value="mRNA"/>
</dbReference>
<dbReference type="EMBL" id="BC063710">
    <property type="protein sequence ID" value="AAH63710.1"/>
    <property type="molecule type" value="mRNA"/>
</dbReference>
<dbReference type="CCDS" id="CCDS42105.1">
    <molecule id="Q92874-1"/>
</dbReference>
<dbReference type="RefSeq" id="NP_001288609.1">
    <molecule id="Q92874-1"/>
    <property type="nucleotide sequence ID" value="NM_001301680.2"/>
</dbReference>
<dbReference type="RefSeq" id="NP_001365.1">
    <molecule id="Q92874-1"/>
    <property type="nucleotide sequence ID" value="NM_001374.3"/>
</dbReference>
<dbReference type="RefSeq" id="XP_047289640.1">
    <molecule id="Q92874-1"/>
    <property type="nucleotide sequence ID" value="XM_047433684.1"/>
</dbReference>
<dbReference type="SMR" id="Q92874"/>
<dbReference type="BioGRID" id="108114">
    <property type="interactions" value="38"/>
</dbReference>
<dbReference type="FunCoup" id="Q92874">
    <property type="interactions" value="520"/>
</dbReference>
<dbReference type="IntAct" id="Q92874">
    <property type="interactions" value="22"/>
</dbReference>
<dbReference type="STRING" id="9606.ENSP00000454562"/>
<dbReference type="iPTMnet" id="Q92874"/>
<dbReference type="PhosphoSitePlus" id="Q92874"/>
<dbReference type="BioMuta" id="DNASE1L2"/>
<dbReference type="DMDM" id="2494172"/>
<dbReference type="jPOST" id="Q92874"/>
<dbReference type="MassIVE" id="Q92874"/>
<dbReference type="PaxDb" id="9606-ENSP00000454562"/>
<dbReference type="PeptideAtlas" id="Q92874"/>
<dbReference type="ProteomicsDB" id="66528"/>
<dbReference type="ProteomicsDB" id="75558">
    <molecule id="Q92874-1"/>
</dbReference>
<dbReference type="Antibodypedia" id="51835">
    <property type="antibodies" value="55 antibodies from 12 providers"/>
</dbReference>
<dbReference type="DNASU" id="1775"/>
<dbReference type="Ensembl" id="ENST00000320700.10">
    <molecule id="Q92874-1"/>
    <property type="protein sequence ID" value="ENSP00000316938.5"/>
    <property type="gene ID" value="ENSG00000167968.13"/>
</dbReference>
<dbReference type="Ensembl" id="ENST00000382437.8">
    <molecule id="Q92874-2"/>
    <property type="protein sequence ID" value="ENSP00000371874.4"/>
    <property type="gene ID" value="ENSG00000167968.13"/>
</dbReference>
<dbReference type="Ensembl" id="ENST00000564065.5">
    <molecule id="Q92874-1"/>
    <property type="protein sequence ID" value="ENSP00000454562.1"/>
    <property type="gene ID" value="ENSG00000167968.13"/>
</dbReference>
<dbReference type="Ensembl" id="ENST00000567494.5">
    <molecule id="Q92874-1"/>
    <property type="protein sequence ID" value="ENSP00000455358.1"/>
    <property type="gene ID" value="ENSG00000167968.13"/>
</dbReference>
<dbReference type="Ensembl" id="ENST00000613572.4">
    <molecule id="Q92874-2"/>
    <property type="protein sequence ID" value="ENSP00000482627.1"/>
    <property type="gene ID" value="ENSG00000167968.13"/>
</dbReference>
<dbReference type="GeneID" id="1775"/>
<dbReference type="KEGG" id="hsa:1775"/>
<dbReference type="MANE-Select" id="ENST00000320700.10">
    <property type="protein sequence ID" value="ENSP00000316938.5"/>
    <property type="RefSeq nucleotide sequence ID" value="NM_001374.3"/>
    <property type="RefSeq protein sequence ID" value="NP_001365.1"/>
</dbReference>
<dbReference type="UCSC" id="uc002cpn.4">
    <molecule id="Q92874-1"/>
    <property type="organism name" value="human"/>
</dbReference>
<dbReference type="AGR" id="HGNC:2958"/>
<dbReference type="CTD" id="1775"/>
<dbReference type="DisGeNET" id="1775"/>
<dbReference type="GeneCards" id="DNASE1L2"/>
<dbReference type="HGNC" id="HGNC:2958">
    <property type="gene designation" value="DNASE1L2"/>
</dbReference>
<dbReference type="HPA" id="ENSG00000167968">
    <property type="expression patterns" value="Group enriched (brain, skin)"/>
</dbReference>
<dbReference type="MIM" id="602622">
    <property type="type" value="gene"/>
</dbReference>
<dbReference type="neXtProt" id="NX_Q92874"/>
<dbReference type="OpenTargets" id="ENSG00000167968"/>
<dbReference type="PharmGKB" id="PA27429"/>
<dbReference type="VEuPathDB" id="HostDB:ENSG00000167968"/>
<dbReference type="eggNOG" id="ENOG502SGB6">
    <property type="taxonomic scope" value="Eukaryota"/>
</dbReference>
<dbReference type="GeneTree" id="ENSGT00950000182846"/>
<dbReference type="HOGENOM" id="CLU_043335_2_1_1"/>
<dbReference type="InParanoid" id="Q92874"/>
<dbReference type="OMA" id="DCSYVRE"/>
<dbReference type="OrthoDB" id="10061407at2759"/>
<dbReference type="PAN-GO" id="Q92874">
    <property type="GO annotations" value="4 GO annotations based on evolutionary models"/>
</dbReference>
<dbReference type="PhylomeDB" id="Q92874"/>
<dbReference type="TreeFam" id="TF329541"/>
<dbReference type="PathwayCommons" id="Q92874"/>
<dbReference type="SignaLink" id="Q92874"/>
<dbReference type="BioGRID-ORCS" id="1775">
    <property type="hits" value="11 hits in 1150 CRISPR screens"/>
</dbReference>
<dbReference type="ChiTaRS" id="DNASE1L2">
    <property type="organism name" value="human"/>
</dbReference>
<dbReference type="GeneWiki" id="DNASE1L2"/>
<dbReference type="GenomeRNAi" id="1775"/>
<dbReference type="Pharos" id="Q92874">
    <property type="development level" value="Tbio"/>
</dbReference>
<dbReference type="PRO" id="PR:Q92874"/>
<dbReference type="Proteomes" id="UP000005640">
    <property type="component" value="Chromosome 16"/>
</dbReference>
<dbReference type="RNAct" id="Q92874">
    <property type="molecule type" value="protein"/>
</dbReference>
<dbReference type="Bgee" id="ENSG00000167968">
    <property type="expression patterns" value="Expressed in skin of abdomen and 107 other cell types or tissues"/>
</dbReference>
<dbReference type="ExpressionAtlas" id="Q92874">
    <property type="expression patterns" value="baseline and differential"/>
</dbReference>
<dbReference type="GO" id="GO:0005737">
    <property type="term" value="C:cytoplasm"/>
    <property type="evidence" value="ECO:0007669"/>
    <property type="project" value="UniProtKB-SubCell"/>
</dbReference>
<dbReference type="GO" id="GO:0005576">
    <property type="term" value="C:extracellular region"/>
    <property type="evidence" value="ECO:0007669"/>
    <property type="project" value="UniProtKB-SubCell"/>
</dbReference>
<dbReference type="GO" id="GO:0005634">
    <property type="term" value="C:nucleus"/>
    <property type="evidence" value="ECO:0000318"/>
    <property type="project" value="GO_Central"/>
</dbReference>
<dbReference type="GO" id="GO:0005509">
    <property type="term" value="F:calcium ion binding"/>
    <property type="evidence" value="ECO:0000304"/>
    <property type="project" value="ProtInc"/>
</dbReference>
<dbReference type="GO" id="GO:0004530">
    <property type="term" value="F:deoxyribonuclease I activity"/>
    <property type="evidence" value="ECO:0000318"/>
    <property type="project" value="GO_Central"/>
</dbReference>
<dbReference type="GO" id="GO:0003677">
    <property type="term" value="F:DNA binding"/>
    <property type="evidence" value="ECO:0000318"/>
    <property type="project" value="GO_Central"/>
</dbReference>
<dbReference type="GO" id="GO:0004536">
    <property type="term" value="F:DNA nuclease activity"/>
    <property type="evidence" value="ECO:0000304"/>
    <property type="project" value="ProtInc"/>
</dbReference>
<dbReference type="GO" id="GO:0003335">
    <property type="term" value="P:corneocyte development"/>
    <property type="evidence" value="ECO:0007669"/>
    <property type="project" value="Ensembl"/>
</dbReference>
<dbReference type="GO" id="GO:0006308">
    <property type="term" value="P:DNA catabolic process"/>
    <property type="evidence" value="ECO:0000318"/>
    <property type="project" value="GO_Central"/>
</dbReference>
<dbReference type="GO" id="GO:0006259">
    <property type="term" value="P:DNA metabolic process"/>
    <property type="evidence" value="ECO:0000304"/>
    <property type="project" value="ProtInc"/>
</dbReference>
<dbReference type="GO" id="GO:0001942">
    <property type="term" value="P:hair follicle development"/>
    <property type="evidence" value="ECO:0007669"/>
    <property type="project" value="Ensembl"/>
</dbReference>
<dbReference type="CDD" id="cd10282">
    <property type="entry name" value="DNase1"/>
    <property type="match status" value="1"/>
</dbReference>
<dbReference type="FunFam" id="3.60.10.10:FF:000047">
    <property type="entry name" value="Deoxyribonuclease"/>
    <property type="match status" value="1"/>
</dbReference>
<dbReference type="Gene3D" id="3.60.10.10">
    <property type="entry name" value="Endonuclease/exonuclease/phosphatase"/>
    <property type="match status" value="1"/>
</dbReference>
<dbReference type="InterPro" id="IPR018057">
    <property type="entry name" value="Deoxyribonuclease-1_AS"/>
</dbReference>
<dbReference type="InterPro" id="IPR016202">
    <property type="entry name" value="DNase_I"/>
</dbReference>
<dbReference type="InterPro" id="IPR033125">
    <property type="entry name" value="DNASE_I_2"/>
</dbReference>
<dbReference type="InterPro" id="IPR036691">
    <property type="entry name" value="Endo/exonu/phosph_ase_sf"/>
</dbReference>
<dbReference type="InterPro" id="IPR005135">
    <property type="entry name" value="Endo/exonuclease/phosphatase"/>
</dbReference>
<dbReference type="PANTHER" id="PTHR11371">
    <property type="entry name" value="DEOXYRIBONUCLEASE"/>
    <property type="match status" value="1"/>
</dbReference>
<dbReference type="PANTHER" id="PTHR11371:SF29">
    <property type="entry name" value="DEOXYRIBONUCLEASE-1-LIKE 2"/>
    <property type="match status" value="1"/>
</dbReference>
<dbReference type="Pfam" id="PF03372">
    <property type="entry name" value="Exo_endo_phos"/>
    <property type="match status" value="1"/>
</dbReference>
<dbReference type="PIRSF" id="PIRSF000988">
    <property type="entry name" value="DNase_I_euk"/>
    <property type="match status" value="1"/>
</dbReference>
<dbReference type="PRINTS" id="PR00130">
    <property type="entry name" value="DNASEI"/>
</dbReference>
<dbReference type="SMART" id="SM00476">
    <property type="entry name" value="DNaseIc"/>
    <property type="match status" value="1"/>
</dbReference>
<dbReference type="SUPFAM" id="SSF56219">
    <property type="entry name" value="DNase I-like"/>
    <property type="match status" value="1"/>
</dbReference>
<dbReference type="PROSITE" id="PS00919">
    <property type="entry name" value="DNASE_I_1"/>
    <property type="match status" value="1"/>
</dbReference>
<dbReference type="PROSITE" id="PS00918">
    <property type="entry name" value="DNASE_I_2"/>
    <property type="match status" value="1"/>
</dbReference>
<evidence type="ECO:0000250" key="1"/>
<evidence type="ECO:0000255" key="2"/>
<evidence type="ECO:0000269" key="3">
    <source>
    </source>
</evidence>
<evidence type="ECO:0000269" key="4">
    <source>
    </source>
</evidence>
<evidence type="ECO:0000303" key="5">
    <source>
    </source>
</evidence>
<evidence type="ECO:0000305" key="6"/>
<reference key="1">
    <citation type="journal article" date="1997" name="Genomics">
        <title>Identification, localization, and expression of two novel human genes similar to deoxyribonuclease I.</title>
        <authorList>
            <person name="Rodriguez A.M."/>
            <person name="Rodin D."/>
            <person name="Nomura H."/>
            <person name="Morton C.C."/>
            <person name="Weremowicz S."/>
            <person name="Schneider M.C."/>
        </authorList>
    </citation>
    <scope>NUCLEOTIDE SEQUENCE [MRNA] (ISOFORM 1)</scope>
</reference>
<reference key="2">
    <citation type="journal article" date="2004" name="Genomics">
        <title>Characterization of the human DNAS1L2 gene and the molecular mechanism for its transcriptional activation induced by inflammatory cytokines.</title>
        <authorList>
            <person name="Shiokawa D."/>
            <person name="Matsushita T."/>
            <person name="Kobayashi T."/>
            <person name="Matsumoto Y."/>
            <person name="Tanuma S.I."/>
        </authorList>
    </citation>
    <scope>NUCLEOTIDE SEQUENCE [GENOMIC DNA / MRNA] (ISOFORMS 1 AND 2)</scope>
    <scope>INDUCTION</scope>
    <scope>COFACTOR</scope>
    <scope>ALTERNATIVE SPLICING</scope>
</reference>
<reference key="3">
    <citation type="journal article" date="2004" name="Nat. Genet.">
        <title>Complete sequencing and characterization of 21,243 full-length human cDNAs.</title>
        <authorList>
            <person name="Ota T."/>
            <person name="Suzuki Y."/>
            <person name="Nishikawa T."/>
            <person name="Otsuki T."/>
            <person name="Sugiyama T."/>
            <person name="Irie R."/>
            <person name="Wakamatsu A."/>
            <person name="Hayashi K."/>
            <person name="Sato H."/>
            <person name="Nagai K."/>
            <person name="Kimura K."/>
            <person name="Makita H."/>
            <person name="Sekine M."/>
            <person name="Obayashi M."/>
            <person name="Nishi T."/>
            <person name="Shibahara T."/>
            <person name="Tanaka T."/>
            <person name="Ishii S."/>
            <person name="Yamamoto J."/>
            <person name="Saito K."/>
            <person name="Kawai Y."/>
            <person name="Isono Y."/>
            <person name="Nakamura Y."/>
            <person name="Nagahari K."/>
            <person name="Murakami K."/>
            <person name="Yasuda T."/>
            <person name="Iwayanagi T."/>
            <person name="Wagatsuma M."/>
            <person name="Shiratori A."/>
            <person name="Sudo H."/>
            <person name="Hosoiri T."/>
            <person name="Kaku Y."/>
            <person name="Kodaira H."/>
            <person name="Kondo H."/>
            <person name="Sugawara M."/>
            <person name="Takahashi M."/>
            <person name="Kanda K."/>
            <person name="Yokoi T."/>
            <person name="Furuya T."/>
            <person name="Kikkawa E."/>
            <person name="Omura Y."/>
            <person name="Abe K."/>
            <person name="Kamihara K."/>
            <person name="Katsuta N."/>
            <person name="Sato K."/>
            <person name="Tanikawa M."/>
            <person name="Yamazaki M."/>
            <person name="Ninomiya K."/>
            <person name="Ishibashi T."/>
            <person name="Yamashita H."/>
            <person name="Murakawa K."/>
            <person name="Fujimori K."/>
            <person name="Tanai H."/>
            <person name="Kimata M."/>
            <person name="Watanabe M."/>
            <person name="Hiraoka S."/>
            <person name="Chiba Y."/>
            <person name="Ishida S."/>
            <person name="Ono Y."/>
            <person name="Takiguchi S."/>
            <person name="Watanabe S."/>
            <person name="Yosida M."/>
            <person name="Hotuta T."/>
            <person name="Kusano J."/>
            <person name="Kanehori K."/>
            <person name="Takahashi-Fujii A."/>
            <person name="Hara H."/>
            <person name="Tanase T.-O."/>
            <person name="Nomura Y."/>
            <person name="Togiya S."/>
            <person name="Komai F."/>
            <person name="Hara R."/>
            <person name="Takeuchi K."/>
            <person name="Arita M."/>
            <person name="Imose N."/>
            <person name="Musashino K."/>
            <person name="Yuuki H."/>
            <person name="Oshima A."/>
            <person name="Sasaki N."/>
            <person name="Aotsuka S."/>
            <person name="Yoshikawa Y."/>
            <person name="Matsunawa H."/>
            <person name="Ichihara T."/>
            <person name="Shiohata N."/>
            <person name="Sano S."/>
            <person name="Moriya S."/>
            <person name="Momiyama H."/>
            <person name="Satoh N."/>
            <person name="Takami S."/>
            <person name="Terashima Y."/>
            <person name="Suzuki O."/>
            <person name="Nakagawa S."/>
            <person name="Senoh A."/>
            <person name="Mizoguchi H."/>
            <person name="Goto Y."/>
            <person name="Shimizu F."/>
            <person name="Wakebe H."/>
            <person name="Hishigaki H."/>
            <person name="Watanabe T."/>
            <person name="Sugiyama A."/>
            <person name="Takemoto M."/>
            <person name="Kawakami B."/>
            <person name="Yamazaki M."/>
            <person name="Watanabe K."/>
            <person name="Kumagai A."/>
            <person name="Itakura S."/>
            <person name="Fukuzumi Y."/>
            <person name="Fujimori Y."/>
            <person name="Komiyama M."/>
            <person name="Tashiro H."/>
            <person name="Tanigami A."/>
            <person name="Fujiwara T."/>
            <person name="Ono T."/>
            <person name="Yamada K."/>
            <person name="Fujii Y."/>
            <person name="Ozaki K."/>
            <person name="Hirao M."/>
            <person name="Ohmori Y."/>
            <person name="Kawabata A."/>
            <person name="Hikiji T."/>
            <person name="Kobatake N."/>
            <person name="Inagaki H."/>
            <person name="Ikema Y."/>
            <person name="Okamoto S."/>
            <person name="Okitani R."/>
            <person name="Kawakami T."/>
            <person name="Noguchi S."/>
            <person name="Itoh T."/>
            <person name="Shigeta K."/>
            <person name="Senba T."/>
            <person name="Matsumura K."/>
            <person name="Nakajima Y."/>
            <person name="Mizuno T."/>
            <person name="Morinaga M."/>
            <person name="Sasaki M."/>
            <person name="Togashi T."/>
            <person name="Oyama M."/>
            <person name="Hata H."/>
            <person name="Watanabe M."/>
            <person name="Komatsu T."/>
            <person name="Mizushima-Sugano J."/>
            <person name="Satoh T."/>
            <person name="Shirai Y."/>
            <person name="Takahashi Y."/>
            <person name="Nakagawa K."/>
            <person name="Okumura K."/>
            <person name="Nagase T."/>
            <person name="Nomura N."/>
            <person name="Kikuchi H."/>
            <person name="Masuho Y."/>
            <person name="Yamashita R."/>
            <person name="Nakai K."/>
            <person name="Yada T."/>
            <person name="Nakamura Y."/>
            <person name="Ohara O."/>
            <person name="Isogai T."/>
            <person name="Sugano S."/>
        </authorList>
    </citation>
    <scope>NUCLEOTIDE SEQUENCE [LARGE SCALE MRNA]</scope>
    <source>
        <tissue>Thymus</tissue>
    </source>
</reference>
<reference key="4">
    <citation type="journal article" date="2004" name="Nature">
        <title>The sequence and analysis of duplication-rich human chromosome 16.</title>
        <authorList>
            <person name="Martin J."/>
            <person name="Han C."/>
            <person name="Gordon L.A."/>
            <person name="Terry A."/>
            <person name="Prabhakar S."/>
            <person name="She X."/>
            <person name="Xie G."/>
            <person name="Hellsten U."/>
            <person name="Chan Y.M."/>
            <person name="Altherr M."/>
            <person name="Couronne O."/>
            <person name="Aerts A."/>
            <person name="Bajorek E."/>
            <person name="Black S."/>
            <person name="Blumer H."/>
            <person name="Branscomb E."/>
            <person name="Brown N.C."/>
            <person name="Bruno W.J."/>
            <person name="Buckingham J.M."/>
            <person name="Callen D.F."/>
            <person name="Campbell C.S."/>
            <person name="Campbell M.L."/>
            <person name="Campbell E.W."/>
            <person name="Caoile C."/>
            <person name="Challacombe J.F."/>
            <person name="Chasteen L.A."/>
            <person name="Chertkov O."/>
            <person name="Chi H.C."/>
            <person name="Christensen M."/>
            <person name="Clark L.M."/>
            <person name="Cohn J.D."/>
            <person name="Denys M."/>
            <person name="Detter J.C."/>
            <person name="Dickson M."/>
            <person name="Dimitrijevic-Bussod M."/>
            <person name="Escobar J."/>
            <person name="Fawcett J.J."/>
            <person name="Flowers D."/>
            <person name="Fotopulos D."/>
            <person name="Glavina T."/>
            <person name="Gomez M."/>
            <person name="Gonzales E."/>
            <person name="Goodstein D."/>
            <person name="Goodwin L.A."/>
            <person name="Grady D.L."/>
            <person name="Grigoriev I."/>
            <person name="Groza M."/>
            <person name="Hammon N."/>
            <person name="Hawkins T."/>
            <person name="Haydu L."/>
            <person name="Hildebrand C.E."/>
            <person name="Huang W."/>
            <person name="Israni S."/>
            <person name="Jett J."/>
            <person name="Jewett P.B."/>
            <person name="Kadner K."/>
            <person name="Kimball H."/>
            <person name="Kobayashi A."/>
            <person name="Krawczyk M.-C."/>
            <person name="Leyba T."/>
            <person name="Longmire J.L."/>
            <person name="Lopez F."/>
            <person name="Lou Y."/>
            <person name="Lowry S."/>
            <person name="Ludeman T."/>
            <person name="Manohar C.F."/>
            <person name="Mark G.A."/>
            <person name="McMurray K.L."/>
            <person name="Meincke L.J."/>
            <person name="Morgan J."/>
            <person name="Moyzis R.K."/>
            <person name="Mundt M.O."/>
            <person name="Munk A.C."/>
            <person name="Nandkeshwar R.D."/>
            <person name="Pitluck S."/>
            <person name="Pollard M."/>
            <person name="Predki P."/>
            <person name="Parson-Quintana B."/>
            <person name="Ramirez L."/>
            <person name="Rash S."/>
            <person name="Retterer J."/>
            <person name="Ricke D.O."/>
            <person name="Robinson D.L."/>
            <person name="Rodriguez A."/>
            <person name="Salamov A."/>
            <person name="Saunders E.H."/>
            <person name="Scott D."/>
            <person name="Shough T."/>
            <person name="Stallings R.L."/>
            <person name="Stalvey M."/>
            <person name="Sutherland R.D."/>
            <person name="Tapia R."/>
            <person name="Tesmer J.G."/>
            <person name="Thayer N."/>
            <person name="Thompson L.S."/>
            <person name="Tice H."/>
            <person name="Torney D.C."/>
            <person name="Tran-Gyamfi M."/>
            <person name="Tsai M."/>
            <person name="Ulanovsky L.E."/>
            <person name="Ustaszewska A."/>
            <person name="Vo N."/>
            <person name="White P.S."/>
            <person name="Williams A.L."/>
            <person name="Wills P.L."/>
            <person name="Wu J.-R."/>
            <person name="Wu K."/>
            <person name="Yang J."/>
            <person name="DeJong P."/>
            <person name="Bruce D."/>
            <person name="Doggett N.A."/>
            <person name="Deaven L."/>
            <person name="Schmutz J."/>
            <person name="Grimwood J."/>
            <person name="Richardson P."/>
            <person name="Rokhsar D.S."/>
            <person name="Eichler E.E."/>
            <person name="Gilna P."/>
            <person name="Lucas S.M."/>
            <person name="Myers R.M."/>
            <person name="Rubin E.M."/>
            <person name="Pennacchio L.A."/>
        </authorList>
    </citation>
    <scope>NUCLEOTIDE SEQUENCE [LARGE SCALE GENOMIC DNA]</scope>
</reference>
<reference key="5">
    <citation type="submission" date="2005-09" db="EMBL/GenBank/DDBJ databases">
        <authorList>
            <person name="Mural R.J."/>
            <person name="Istrail S."/>
            <person name="Sutton G."/>
            <person name="Florea L."/>
            <person name="Halpern A.L."/>
            <person name="Mobarry C.M."/>
            <person name="Lippert R."/>
            <person name="Walenz B."/>
            <person name="Shatkay H."/>
            <person name="Dew I."/>
            <person name="Miller J.R."/>
            <person name="Flanigan M.J."/>
            <person name="Edwards N.J."/>
            <person name="Bolanos R."/>
            <person name="Fasulo D."/>
            <person name="Halldorsson B.V."/>
            <person name="Hannenhalli S."/>
            <person name="Turner R."/>
            <person name="Yooseph S."/>
            <person name="Lu F."/>
            <person name="Nusskern D.R."/>
            <person name="Shue B.C."/>
            <person name="Zheng X.H."/>
            <person name="Zhong F."/>
            <person name="Delcher A.L."/>
            <person name="Huson D.H."/>
            <person name="Kravitz S.A."/>
            <person name="Mouchard L."/>
            <person name="Reinert K."/>
            <person name="Remington K.A."/>
            <person name="Clark A.G."/>
            <person name="Waterman M.S."/>
            <person name="Eichler E.E."/>
            <person name="Adams M.D."/>
            <person name="Hunkapiller M.W."/>
            <person name="Myers E.W."/>
            <person name="Venter J.C."/>
        </authorList>
    </citation>
    <scope>NUCLEOTIDE SEQUENCE [LARGE SCALE GENOMIC DNA]</scope>
</reference>
<reference key="6">
    <citation type="journal article" date="2004" name="Genome Res.">
        <title>The status, quality, and expansion of the NIH full-length cDNA project: the Mammalian Gene Collection (MGC).</title>
        <authorList>
            <consortium name="The MGC Project Team"/>
        </authorList>
    </citation>
    <scope>NUCLEOTIDE SEQUENCE [LARGE SCALE MRNA] (ISOFORM 1)</scope>
    <source>
        <tissue>Skin</tissue>
    </source>
</reference>
<reference key="7">
    <citation type="journal article" date="2007" name="J. Invest. Dermatol.">
        <title>DNase1L2 degrades nuclear DNA during corneocyte formation.</title>
        <authorList>
            <person name="Fischer H."/>
            <person name="Eckhart L."/>
            <person name="Mildner M."/>
            <person name="Jaeger K."/>
            <person name="Buchberger M."/>
            <person name="Ghannadan M."/>
            <person name="Tschachler E."/>
        </authorList>
    </citation>
    <scope>FUNCTION</scope>
    <scope>TISSUE SPECIFICITY</scope>
    <scope>SUBCELLULAR LOCATION</scope>
</reference>
<accession>Q92874</accession>
<accession>E9PBY4</accession>
<accession>Q6JVM2</accession>
<accession>Q6JVM3</accession>
<feature type="signal peptide" evidence="2">
    <location>
        <begin position="1"/>
        <end position="20"/>
    </location>
</feature>
<feature type="chain" id="PRO_0000007286" description="Deoxyribonuclease-1-like 2">
    <location>
        <begin position="21"/>
        <end position="299"/>
    </location>
</feature>
<feature type="active site" evidence="1">
    <location>
        <position position="99"/>
    </location>
</feature>
<feature type="active site" evidence="1">
    <location>
        <position position="170"/>
    </location>
</feature>
<feature type="disulfide bond" description="Essential for enzymatic activity" evidence="1">
    <location>
        <begin position="209"/>
        <end position="245"/>
    </location>
</feature>
<feature type="splice variant" id="VSP_053879" description="In isoform 2." evidence="5">
    <location>
        <begin position="140"/>
        <end position="160"/>
    </location>
</feature>
<proteinExistence type="evidence at protein level"/>
<organism>
    <name type="scientific">Homo sapiens</name>
    <name type="common">Human</name>
    <dbReference type="NCBI Taxonomy" id="9606"/>
    <lineage>
        <taxon>Eukaryota</taxon>
        <taxon>Metazoa</taxon>
        <taxon>Chordata</taxon>
        <taxon>Craniata</taxon>
        <taxon>Vertebrata</taxon>
        <taxon>Euteleostomi</taxon>
        <taxon>Mammalia</taxon>
        <taxon>Eutheria</taxon>
        <taxon>Euarchontoglires</taxon>
        <taxon>Primates</taxon>
        <taxon>Haplorrhini</taxon>
        <taxon>Catarrhini</taxon>
        <taxon>Hominidae</taxon>
        <taxon>Homo</taxon>
    </lineage>
</organism>
<name>DNSL2_HUMAN</name>
<sequence length="299" mass="32853">MGGPRALLAALWALEAAGTAALRIGAFNIQSFGDSKVSDPACGSIIAKILAGYDLALVQEVRDPDLSAVSALMEQINSVSEHEYSFVSSQPLGRDQYKEMYLFVYRKDAVSVVDTYLYPDPEDVFSREPFVVKFSAPGTGERAPPLPSRRALTPPPLPAAAQNLVLIPLHAAPHQAVAEIDALYDVYLDVIDKWGTDDMLFLGDFNADCSYVRAQDWAAIRLRSSEVFKWLIPDSADTTVGNSDCAYDRIVACGARLRRSLKPQSATVHDFQEEFGLDQTQALAISDHFPVEVTLKFHR</sequence>
<comment type="function">
    <text evidence="4">Divalent cation-dependent acid DNA endonuclease involved in the breakdown of the nucleus during corneocyte formation of epidermal keratinocytes. May play an immune role by eliminating harmful DNA released into the extracellular environment by damaged epidermal cells.</text>
</comment>
<comment type="cofactor">
    <cofactor evidence="3">
        <name>Mg(2+)</name>
        <dbReference type="ChEBI" id="CHEBI:18420"/>
    </cofactor>
</comment>
<comment type="cofactor">
    <cofactor evidence="3">
        <name>Ca(2+)</name>
        <dbReference type="ChEBI" id="CHEBI:29108"/>
    </cofactor>
</comment>
<comment type="interaction">
    <interactant intactId="EBI-1751995">
        <id>Q92874</id>
    </interactant>
    <interactant intactId="EBI-354921">
        <id>P11021</id>
        <label>HSPA5</label>
    </interactant>
    <organismsDiffer>false</organismsDiffer>
    <experiments>3</experiments>
</comment>
<comment type="subcellular location">
    <subcellularLocation>
        <location evidence="4">Cytoplasm</location>
    </subcellularLocation>
    <subcellularLocation>
        <location evidence="6">Secreted</location>
    </subcellularLocation>
</comment>
<comment type="alternative products">
    <event type="alternative splicing"/>
    <isoform>
        <id>Q92874-1</id>
        <name>1</name>
        <name>DNAS1L2-L</name>
        <sequence type="displayed"/>
    </isoform>
    <isoform>
        <id>Q92874-2</id>
        <name>2</name>
        <name>DNAS1L2-S</name>
        <sequence type="described" ref="VSP_053879"/>
    </isoform>
</comment>
<comment type="tissue specificity">
    <text evidence="4">Preferentially expressed in the skin and up-regulated during keratinocytes differentiation. Highly abundant (at protein level) in the stratum granulosum.</text>
</comment>
<comment type="induction">
    <text evidence="3">Up-regulated by inflammatory cytokines.</text>
</comment>
<comment type="miscellaneous">
    <molecule>Isoform 2</molecule>
    <text evidence="6">Specifically expressed in peripheral blood leukocytes.</text>
</comment>
<comment type="similarity">
    <text evidence="6">Belongs to the DNase I family.</text>
</comment>
<gene>
    <name type="primary">DNASE1L2</name>
    <name type="synonym">DHP1</name>
    <name type="synonym">DNAS1L2</name>
</gene>